<proteinExistence type="evidence at transcript level"/>
<keyword id="KW-0927">Auxin signaling pathway</keyword>
<keyword id="KW-0539">Nucleus</keyword>
<keyword id="KW-0678">Repressor</keyword>
<keyword id="KW-0804">Transcription</keyword>
<keyword id="KW-0805">Transcription regulation</keyword>
<accession>P49680</accession>
<evidence type="ECO:0000250" key="1"/>
<evidence type="ECO:0000255" key="2">
    <source>
        <dbReference type="PROSITE-ProRule" id="PRU01081"/>
    </source>
</evidence>
<evidence type="ECO:0000256" key="3">
    <source>
        <dbReference type="SAM" id="MobiDB-lite"/>
    </source>
</evidence>
<evidence type="ECO:0000305" key="4"/>
<name>IAA6_PEA</name>
<organism>
    <name type="scientific">Pisum sativum</name>
    <name type="common">Garden pea</name>
    <name type="synonym">Lathyrus oleraceus</name>
    <dbReference type="NCBI Taxonomy" id="3888"/>
    <lineage>
        <taxon>Eukaryota</taxon>
        <taxon>Viridiplantae</taxon>
        <taxon>Streptophyta</taxon>
        <taxon>Embryophyta</taxon>
        <taxon>Tracheophyta</taxon>
        <taxon>Spermatophyta</taxon>
        <taxon>Magnoliopsida</taxon>
        <taxon>eudicotyledons</taxon>
        <taxon>Gunneridae</taxon>
        <taxon>Pentapetalae</taxon>
        <taxon>rosids</taxon>
        <taxon>fabids</taxon>
        <taxon>Fabales</taxon>
        <taxon>Fabaceae</taxon>
        <taxon>Papilionoideae</taxon>
        <taxon>50 kb inversion clade</taxon>
        <taxon>NPAAA clade</taxon>
        <taxon>Hologalegina</taxon>
        <taxon>IRL clade</taxon>
        <taxon>Fabeae</taxon>
        <taxon>Pisum</taxon>
    </lineage>
</organism>
<reference key="1">
    <citation type="journal article" date="1993" name="J. Mol. Biol.">
        <title>Structural characterization of the early indoleacetic acid-inducible genes, PS-IAA4/5 and PS-IAA6, of pea (Pisum sativum L.).</title>
        <authorList>
            <person name="Oeller P.W."/>
            <person name="Keller J.A."/>
            <person name="Parks J.E."/>
            <person name="Silbert J.E."/>
            <person name="Theologis A."/>
        </authorList>
    </citation>
    <scope>NUCLEOTIDE SEQUENCE [GENOMIC DNA / MRNA]</scope>
    <source>
        <strain>cv. Alaska</strain>
    </source>
</reference>
<gene>
    <name type="primary">IAA6</name>
</gene>
<dbReference type="EMBL" id="X68218">
    <property type="protein sequence ID" value="CAA48300.1"/>
    <property type="molecule type" value="Genomic_DNA"/>
</dbReference>
<dbReference type="EMBL" id="X68217">
    <property type="protein sequence ID" value="CAA48299.1"/>
    <property type="molecule type" value="mRNA"/>
</dbReference>
<dbReference type="PIR" id="S39078">
    <property type="entry name" value="S39078"/>
</dbReference>
<dbReference type="SMR" id="P49680"/>
<dbReference type="ELM" id="P49680"/>
<dbReference type="OrthoDB" id="1926344at2759"/>
<dbReference type="GO" id="GO:0005634">
    <property type="term" value="C:nucleus"/>
    <property type="evidence" value="ECO:0007669"/>
    <property type="project" value="UniProtKB-SubCell"/>
</dbReference>
<dbReference type="GO" id="GO:0009734">
    <property type="term" value="P:auxin-activated signaling pathway"/>
    <property type="evidence" value="ECO:0007669"/>
    <property type="project" value="UniProtKB-KW"/>
</dbReference>
<dbReference type="GO" id="GO:0006355">
    <property type="term" value="P:regulation of DNA-templated transcription"/>
    <property type="evidence" value="ECO:0007669"/>
    <property type="project" value="InterPro"/>
</dbReference>
<dbReference type="FunFam" id="3.10.20.90:FF:000078">
    <property type="entry name" value="Auxin-responsive protein"/>
    <property type="match status" value="1"/>
</dbReference>
<dbReference type="Gene3D" id="3.10.20.90">
    <property type="entry name" value="Phosphatidylinositol 3-kinase Catalytic Subunit, Chain A, domain 1"/>
    <property type="match status" value="1"/>
</dbReference>
<dbReference type="InterPro" id="IPR033389">
    <property type="entry name" value="AUX/IAA_dom"/>
</dbReference>
<dbReference type="InterPro" id="IPR003311">
    <property type="entry name" value="AUX_IAA"/>
</dbReference>
<dbReference type="InterPro" id="IPR053793">
    <property type="entry name" value="PB1-like"/>
</dbReference>
<dbReference type="PANTHER" id="PTHR31734">
    <property type="entry name" value="AUXIN-RESPONSIVE PROTEIN IAA17"/>
    <property type="match status" value="1"/>
</dbReference>
<dbReference type="PANTHER" id="PTHR31734:SF121">
    <property type="entry name" value="AUXIN-RESPONSIVE PROTEIN IAA19"/>
    <property type="match status" value="1"/>
</dbReference>
<dbReference type="Pfam" id="PF02309">
    <property type="entry name" value="AUX_IAA"/>
    <property type="match status" value="1"/>
</dbReference>
<dbReference type="SUPFAM" id="SSF54277">
    <property type="entry name" value="CAD &amp; PB1 domains"/>
    <property type="match status" value="1"/>
</dbReference>
<dbReference type="PROSITE" id="PS51745">
    <property type="entry name" value="PB1"/>
    <property type="match status" value="1"/>
</dbReference>
<protein>
    <recommendedName>
        <fullName>Auxin-induced protein IAA6</fullName>
    </recommendedName>
</protein>
<comment type="function">
    <text evidence="1">Aux/IAA proteins are short-lived transcriptional factors that function as repressors of early auxin response genes at low auxin concentrations. Repression is thought to result from the interaction with auxin response factors (ARFs), proteins that bind to the auxin-responsive promoter element (AuxRE). Formation of heterodimers with ARF proteins may alter their ability to modulate early auxin response genes expression (By similarity).</text>
</comment>
<comment type="subunit">
    <text evidence="1">Homodimers and heterodimers.</text>
</comment>
<comment type="subcellular location">
    <subcellularLocation>
        <location>Nucleus</location>
    </subcellularLocation>
</comment>
<comment type="induction">
    <text>By auxin.</text>
</comment>
<comment type="domain">
    <text evidence="1">The N-terminal half of the protein contains two conserved domains I and II. Domain I includes a slightly degenerated ERF-associated amphiphilic repression (EAR) motif which seems to be involved in the activity of transcriptional repression. Domain II is required for the correct degradation of the protein through the SCF-mediated ubiquitin-proteasome pathway. Interactions between Aux/IAA proteins and auxin response factors (ARFs) occur through their C-terminal dimerization domains III and IV (By similarity).</text>
</comment>
<comment type="similarity">
    <text evidence="4">Belongs to the Aux/IAA family.</text>
</comment>
<feature type="chain" id="PRO_0000112862" description="Auxin-induced protein IAA6">
    <location>
        <begin position="1"/>
        <end position="179"/>
    </location>
</feature>
<feature type="domain" description="PB1" evidence="2">
    <location>
        <begin position="75"/>
        <end position="163"/>
    </location>
</feature>
<feature type="region of interest" description="Disordered" evidence="3">
    <location>
        <begin position="31"/>
        <end position="52"/>
    </location>
</feature>
<feature type="short sequence motif" description="EAR-like (transcriptional repression)">
    <location>
        <begin position="13"/>
        <end position="17"/>
    </location>
</feature>
<sequence length="179" mass="20331">MAREGLGLEITELRLGLSCGEPKKNEKKRMFSEIDGGVEENGGSGDRKSVDKKNQVVGWPPVCSYRKKNMNEGSKMYMKVSMDGAPYLRKIDLCLHKGYLELALALEKLFDCCGIEEALKDAENCEHVPIYEDKDGDWMLVGDVPWEMFIESCKRLRIMKRSDAKGFDLQPKGSLKRFI</sequence>